<reference key="1">
    <citation type="submission" date="2009-01" db="EMBL/GenBank/DDBJ databases">
        <title>Complete sequence of chromosome of Caldicellulosiruptor becscii DSM 6725.</title>
        <authorList>
            <person name="Lucas S."/>
            <person name="Copeland A."/>
            <person name="Lapidus A."/>
            <person name="Glavina del Rio T."/>
            <person name="Tice H."/>
            <person name="Bruce D."/>
            <person name="Goodwin L."/>
            <person name="Pitluck S."/>
            <person name="Sims D."/>
            <person name="Meincke L."/>
            <person name="Brettin T."/>
            <person name="Detter J.C."/>
            <person name="Han C."/>
            <person name="Larimer F."/>
            <person name="Land M."/>
            <person name="Hauser L."/>
            <person name="Kyrpides N."/>
            <person name="Ovchinnikova G."/>
            <person name="Kataeva I."/>
            <person name="Adams M.W.W."/>
        </authorList>
    </citation>
    <scope>NUCLEOTIDE SEQUENCE [LARGE SCALE GENOMIC DNA]</scope>
    <source>
        <strain>ATCC BAA-1888 / DSM 6725 / KCTC 15123 / Z-1320</strain>
    </source>
</reference>
<accession>B9MRX9</accession>
<name>NADK_CALBD</name>
<feature type="chain" id="PRO_1000133557" description="NAD kinase">
    <location>
        <begin position="1"/>
        <end position="261"/>
    </location>
</feature>
<feature type="active site" description="Proton acceptor" evidence="1">
    <location>
        <position position="54"/>
    </location>
</feature>
<feature type="binding site" evidence="1">
    <location>
        <begin position="54"/>
        <end position="55"/>
    </location>
    <ligand>
        <name>NAD(+)</name>
        <dbReference type="ChEBI" id="CHEBI:57540"/>
    </ligand>
</feature>
<feature type="binding site" evidence="1">
    <location>
        <begin position="123"/>
        <end position="124"/>
    </location>
    <ligand>
        <name>NAD(+)</name>
        <dbReference type="ChEBI" id="CHEBI:57540"/>
    </ligand>
</feature>
<feature type="binding site" evidence="1">
    <location>
        <position position="150"/>
    </location>
    <ligand>
        <name>NAD(+)</name>
        <dbReference type="ChEBI" id="CHEBI:57540"/>
    </ligand>
</feature>
<feature type="binding site" evidence="1">
    <location>
        <position position="152"/>
    </location>
    <ligand>
        <name>NAD(+)</name>
        <dbReference type="ChEBI" id="CHEBI:57540"/>
    </ligand>
</feature>
<feature type="binding site" evidence="1">
    <location>
        <begin position="163"/>
        <end position="168"/>
    </location>
    <ligand>
        <name>NAD(+)</name>
        <dbReference type="ChEBI" id="CHEBI:57540"/>
    </ligand>
</feature>
<comment type="function">
    <text evidence="1">Involved in the regulation of the intracellular balance of NAD and NADP, and is a key enzyme in the biosynthesis of NADP. Catalyzes specifically the phosphorylation on 2'-hydroxyl of the adenosine moiety of NAD to yield NADP.</text>
</comment>
<comment type="catalytic activity">
    <reaction evidence="1">
        <text>NAD(+) + ATP = ADP + NADP(+) + H(+)</text>
        <dbReference type="Rhea" id="RHEA:18629"/>
        <dbReference type="ChEBI" id="CHEBI:15378"/>
        <dbReference type="ChEBI" id="CHEBI:30616"/>
        <dbReference type="ChEBI" id="CHEBI:57540"/>
        <dbReference type="ChEBI" id="CHEBI:58349"/>
        <dbReference type="ChEBI" id="CHEBI:456216"/>
        <dbReference type="EC" id="2.7.1.23"/>
    </reaction>
</comment>
<comment type="cofactor">
    <cofactor evidence="1">
        <name>a divalent metal cation</name>
        <dbReference type="ChEBI" id="CHEBI:60240"/>
    </cofactor>
</comment>
<comment type="subcellular location">
    <subcellularLocation>
        <location evidence="1">Cytoplasm</location>
    </subcellularLocation>
</comment>
<comment type="similarity">
    <text evidence="1">Belongs to the NAD kinase family.</text>
</comment>
<sequence length="261" mass="29214">MEVGIFVNFQKERSSEILENIVSIFNQNGVNWLLVNEENKKTKNFDLLITIGGDGTLLNVVEKASKEATPVLAINCGRLGYLTEEVGDDIEKAIFNLLKKEYFIEERHIVEAKVKEKVFFALNDVCIVRNTFNIVDLCLYIDGVFAQEYRSDGIIVATATGSTAYSLSAGGPIVEPQLGVILVTPICPHSLSSRSLVLGSARTIKVENSSSENVQVVVDGRFVDELAPEEFVECKISQHNLKLIRLKQRNFYEILREKIKE</sequence>
<evidence type="ECO:0000255" key="1">
    <source>
        <dbReference type="HAMAP-Rule" id="MF_00361"/>
    </source>
</evidence>
<proteinExistence type="inferred from homology"/>
<gene>
    <name evidence="1" type="primary">nadK</name>
    <name type="ordered locus">Athe_1333</name>
</gene>
<keyword id="KW-0067">ATP-binding</keyword>
<keyword id="KW-0963">Cytoplasm</keyword>
<keyword id="KW-0418">Kinase</keyword>
<keyword id="KW-0520">NAD</keyword>
<keyword id="KW-0521">NADP</keyword>
<keyword id="KW-0547">Nucleotide-binding</keyword>
<keyword id="KW-0808">Transferase</keyword>
<protein>
    <recommendedName>
        <fullName evidence="1">NAD kinase</fullName>
        <ecNumber evidence="1">2.7.1.23</ecNumber>
    </recommendedName>
    <alternativeName>
        <fullName evidence="1">ATP-dependent NAD kinase</fullName>
    </alternativeName>
</protein>
<organism>
    <name type="scientific">Caldicellulosiruptor bescii (strain ATCC BAA-1888 / DSM 6725 / KCTC 15123 / Z-1320)</name>
    <name type="common">Anaerocellum thermophilum</name>
    <dbReference type="NCBI Taxonomy" id="521460"/>
    <lineage>
        <taxon>Bacteria</taxon>
        <taxon>Bacillati</taxon>
        <taxon>Bacillota</taxon>
        <taxon>Bacillota incertae sedis</taxon>
        <taxon>Caldicellulosiruptorales</taxon>
        <taxon>Caldicellulosiruptoraceae</taxon>
        <taxon>Caldicellulosiruptor</taxon>
    </lineage>
</organism>
<dbReference type="EC" id="2.7.1.23" evidence="1"/>
<dbReference type="EMBL" id="CP001393">
    <property type="protein sequence ID" value="ACM60433.1"/>
    <property type="molecule type" value="Genomic_DNA"/>
</dbReference>
<dbReference type="RefSeq" id="WP_015907805.1">
    <property type="nucleotide sequence ID" value="NC_012034.1"/>
</dbReference>
<dbReference type="SMR" id="B9MRX9"/>
<dbReference type="STRING" id="521460.Athe_1333"/>
<dbReference type="GeneID" id="31772680"/>
<dbReference type="KEGG" id="ate:Athe_1333"/>
<dbReference type="eggNOG" id="COG0061">
    <property type="taxonomic scope" value="Bacteria"/>
</dbReference>
<dbReference type="HOGENOM" id="CLU_008831_0_3_9"/>
<dbReference type="Proteomes" id="UP000007723">
    <property type="component" value="Chromosome"/>
</dbReference>
<dbReference type="GO" id="GO:0005737">
    <property type="term" value="C:cytoplasm"/>
    <property type="evidence" value="ECO:0007669"/>
    <property type="project" value="UniProtKB-SubCell"/>
</dbReference>
<dbReference type="GO" id="GO:0005524">
    <property type="term" value="F:ATP binding"/>
    <property type="evidence" value="ECO:0007669"/>
    <property type="project" value="UniProtKB-KW"/>
</dbReference>
<dbReference type="GO" id="GO:0046872">
    <property type="term" value="F:metal ion binding"/>
    <property type="evidence" value="ECO:0007669"/>
    <property type="project" value="UniProtKB-UniRule"/>
</dbReference>
<dbReference type="GO" id="GO:0051287">
    <property type="term" value="F:NAD binding"/>
    <property type="evidence" value="ECO:0007669"/>
    <property type="project" value="UniProtKB-ARBA"/>
</dbReference>
<dbReference type="GO" id="GO:0003951">
    <property type="term" value="F:NAD+ kinase activity"/>
    <property type="evidence" value="ECO:0007669"/>
    <property type="project" value="UniProtKB-UniRule"/>
</dbReference>
<dbReference type="GO" id="GO:0019674">
    <property type="term" value="P:NAD metabolic process"/>
    <property type="evidence" value="ECO:0007669"/>
    <property type="project" value="InterPro"/>
</dbReference>
<dbReference type="GO" id="GO:0006741">
    <property type="term" value="P:NADP biosynthetic process"/>
    <property type="evidence" value="ECO:0007669"/>
    <property type="project" value="UniProtKB-UniRule"/>
</dbReference>
<dbReference type="Gene3D" id="3.40.50.10330">
    <property type="entry name" value="Probable inorganic polyphosphate/atp-NAD kinase, domain 1"/>
    <property type="match status" value="1"/>
</dbReference>
<dbReference type="Gene3D" id="2.60.200.30">
    <property type="entry name" value="Probable inorganic polyphosphate/atp-NAD kinase, domain 2"/>
    <property type="match status" value="1"/>
</dbReference>
<dbReference type="HAMAP" id="MF_00361">
    <property type="entry name" value="NAD_kinase"/>
    <property type="match status" value="1"/>
</dbReference>
<dbReference type="InterPro" id="IPR017438">
    <property type="entry name" value="ATP-NAD_kinase_N"/>
</dbReference>
<dbReference type="InterPro" id="IPR017437">
    <property type="entry name" value="ATP-NAD_kinase_PpnK-typ_C"/>
</dbReference>
<dbReference type="InterPro" id="IPR016064">
    <property type="entry name" value="NAD/diacylglycerol_kinase_sf"/>
</dbReference>
<dbReference type="InterPro" id="IPR002504">
    <property type="entry name" value="NADK"/>
</dbReference>
<dbReference type="PANTHER" id="PTHR20275">
    <property type="entry name" value="NAD KINASE"/>
    <property type="match status" value="1"/>
</dbReference>
<dbReference type="PANTHER" id="PTHR20275:SF0">
    <property type="entry name" value="NAD KINASE"/>
    <property type="match status" value="1"/>
</dbReference>
<dbReference type="Pfam" id="PF01513">
    <property type="entry name" value="NAD_kinase"/>
    <property type="match status" value="1"/>
</dbReference>
<dbReference type="Pfam" id="PF20143">
    <property type="entry name" value="NAD_kinase_C"/>
    <property type="match status" value="1"/>
</dbReference>
<dbReference type="SUPFAM" id="SSF111331">
    <property type="entry name" value="NAD kinase/diacylglycerol kinase-like"/>
    <property type="match status" value="1"/>
</dbReference>